<gene>
    <name evidence="1" type="primary">ahpD</name>
    <name type="ordered locus">Rv2429</name>
    <name type="ORF">MTCY428.17c</name>
</gene>
<reference key="1">
    <citation type="submission" date="1996-01" db="EMBL/GenBank/DDBJ databases">
        <authorList>
            <person name="Zhang Y."/>
            <person name="Dhandayuthapani S."/>
            <person name="Deretic V."/>
        </authorList>
    </citation>
    <scope>NUCLEOTIDE SEQUENCE [GENOMIC DNA]</scope>
    <source>
        <strain>ATCC 25618 / H37Rv</strain>
    </source>
</reference>
<reference key="2">
    <citation type="journal article" date="1998" name="Nature">
        <title>Deciphering the biology of Mycobacterium tuberculosis from the complete genome sequence.</title>
        <authorList>
            <person name="Cole S.T."/>
            <person name="Brosch R."/>
            <person name="Parkhill J."/>
            <person name="Garnier T."/>
            <person name="Churcher C.M."/>
            <person name="Harris D.E."/>
            <person name="Gordon S.V."/>
            <person name="Eiglmeier K."/>
            <person name="Gas S."/>
            <person name="Barry C.E. III"/>
            <person name="Tekaia F."/>
            <person name="Badcock K."/>
            <person name="Basham D."/>
            <person name="Brown D."/>
            <person name="Chillingworth T."/>
            <person name="Connor R."/>
            <person name="Davies R.M."/>
            <person name="Devlin K."/>
            <person name="Feltwell T."/>
            <person name="Gentles S."/>
            <person name="Hamlin N."/>
            <person name="Holroyd S."/>
            <person name="Hornsby T."/>
            <person name="Jagels K."/>
            <person name="Krogh A."/>
            <person name="McLean J."/>
            <person name="Moule S."/>
            <person name="Murphy L.D."/>
            <person name="Oliver S."/>
            <person name="Osborne J."/>
            <person name="Quail M.A."/>
            <person name="Rajandream M.A."/>
            <person name="Rogers J."/>
            <person name="Rutter S."/>
            <person name="Seeger K."/>
            <person name="Skelton S."/>
            <person name="Squares S."/>
            <person name="Squares R."/>
            <person name="Sulston J.E."/>
            <person name="Taylor K."/>
            <person name="Whitehead S."/>
            <person name="Barrell B.G."/>
        </authorList>
    </citation>
    <scope>NUCLEOTIDE SEQUENCE [LARGE SCALE GENOMIC DNA]</scope>
    <source>
        <strain>ATCC 25618 / H37Rv</strain>
    </source>
</reference>
<reference key="3">
    <citation type="journal article" date="2000" name="J. Biol. Chem.">
        <title>The AhpC and AhpD antioxidant defense system of Mycobacterium tuberculosis.</title>
        <authorList>
            <person name="Hillas P.J."/>
            <person name="del Alba F.S."/>
            <person name="Oyarzabal J."/>
            <person name="Wilks A."/>
            <person name="Ortiz De Montellano P.R."/>
        </authorList>
    </citation>
    <scope>FUNCTION</scope>
    <scope>SUBUNIT</scope>
    <scope>MUTAGENESIS OF CYS-130 AND CYS-133</scope>
</reference>
<reference key="4">
    <citation type="journal article" date="2004" name="Arch. Biochem. Biophys.">
        <title>Intermolecular interactions in the AhpC/AhpD antioxidant defense system of Mycobacterium tuberculosis.</title>
        <authorList>
            <person name="Koshkin A."/>
            <person name="Knudsen G.M."/>
            <person name="Ortiz De Montellano P.R."/>
        </authorList>
    </citation>
    <scope>SUBUNIT</scope>
    <scope>DISULFIDE BONDS</scope>
</reference>
<reference key="5">
    <citation type="journal article" date="2011" name="Mol. Cell. Proteomics">
        <title>Proteogenomic analysis of Mycobacterium tuberculosis by high resolution mass spectrometry.</title>
        <authorList>
            <person name="Kelkar D.S."/>
            <person name="Kumar D."/>
            <person name="Kumar P."/>
            <person name="Balakrishnan L."/>
            <person name="Muthusamy B."/>
            <person name="Yadav A.K."/>
            <person name="Shrivastava P."/>
            <person name="Marimuthu A."/>
            <person name="Anand S."/>
            <person name="Sundaram H."/>
            <person name="Kingsbury R."/>
            <person name="Harsha H.C."/>
            <person name="Nair B."/>
            <person name="Prasad T.S."/>
            <person name="Chauhan D.S."/>
            <person name="Katoch K."/>
            <person name="Katoch V.M."/>
            <person name="Kumar P."/>
            <person name="Chaerkady R."/>
            <person name="Ramachandran S."/>
            <person name="Dash D."/>
            <person name="Pandey A."/>
        </authorList>
    </citation>
    <scope>IDENTIFICATION BY MASS SPECTROMETRY [LARGE SCALE ANALYSIS]</scope>
    <source>
        <strain>ATCC 25618 / H37Rv</strain>
    </source>
</reference>
<reference key="6">
    <citation type="journal article" date="2002" name="J. Biol. Chem.">
        <title>The crystal structure of Mycobacterium tuberculosis alkylhydroperoxidase AhpD, a potential target for antitubercular drug design.</title>
        <authorList>
            <person name="Nunn C.M."/>
            <person name="Djordjevic S."/>
            <person name="Hillas P.J."/>
            <person name="Nishida C.R."/>
            <person name="Ortiz de Montellano P.R."/>
        </authorList>
    </citation>
    <scope>X-RAY CRYSTALLOGRAPHY (1.9 ANGSTROMS)</scope>
    <scope>ACTIVE SITE</scope>
    <scope>SUBUNIT</scope>
</reference>
<reference key="7">
    <citation type="journal article" date="2002" name="Science">
        <title>Metabolic enzymes of mycobacteria linked to antioxidant defense by a thioredoxin-like protein.</title>
        <authorList>
            <person name="Bryk R."/>
            <person name="Lima C.D."/>
            <person name="Erdjument-Bromage H."/>
            <person name="Tempst P."/>
            <person name="Nathan C."/>
        </authorList>
    </citation>
    <scope>X-RAY CRYSTALLOGRAPHY (2.0 ANGSTROMS)</scope>
    <scope>FUNCTION</scope>
    <scope>SUBUNIT</scope>
    <scope>MUTAGENESIS OF CYS-130 AND CYS-133</scope>
    <source>
        <strain>ATCC 25618 / H37Rv</strain>
    </source>
</reference>
<reference key="8">
    <citation type="journal article" date="2003" name="J. Biol. Chem.">
        <title>The mechanism of Mycobacterium tuberculosis alkylhydroperoxidase AhpD as defined by mutagenesis, crystallography, and kinetics.</title>
        <authorList>
            <person name="Koshkin A."/>
            <person name="Nunn C.M."/>
            <person name="Djordjevic S."/>
            <person name="Ortiz de Montellano P.R."/>
        </authorList>
    </citation>
    <scope>X-RAY CRYSTALLOGRAPHY (2.3 ANGSTROMS) OF MUTANTS GLN-132 AND PHE-137</scope>
    <scope>FUNCTION</scope>
    <scope>BIOPHYSICOCHEMICAL PROPERTIES</scope>
    <scope>MUTAGENESIS OF GLU-118; CYS-130; HIS-132; CYS-133 AND HIS-137</scope>
</reference>
<protein>
    <recommendedName>
        <fullName evidence="1">Alkyl hydroperoxide reductase AhpD</fullName>
        <ecNumber evidence="1">1.11.1.28</ecNumber>
    </recommendedName>
    <alternativeName>
        <fullName evidence="1">Alkylhydroperoxidase AhpD</fullName>
    </alternativeName>
</protein>
<comment type="function">
    <text>Antioxidant protein with alkyl hydroperoxidase activity. Required for the reduction of the AhpC active site cysteine residues and for the regeneration of the AhpC enzyme activity.</text>
</comment>
<comment type="function">
    <text>Together with AhpC, DlaT and Lpd, constitutes an NADH-dependent peroxidase active against hydrogen and alkyl peroxides as well as serving as a peroxynitrite reductase, thus protecting the bacterium against reactive nitrogen intermediates and oxidative stress generated by the host immune system.</text>
</comment>
<comment type="catalytic activity">
    <reaction evidence="1">
        <text>N(6)-[(R)-dihydrolipoyl]-L-lysyl-[lipoyl-carrier protein] + a hydroperoxide = N(6)-[(R)-lipoyl]-L-lysyl-[lipoyl-carrier protein] + an alcohol + H2O</text>
        <dbReference type="Rhea" id="RHEA:62636"/>
        <dbReference type="Rhea" id="RHEA-COMP:10502"/>
        <dbReference type="Rhea" id="RHEA-COMP:16355"/>
        <dbReference type="ChEBI" id="CHEBI:15377"/>
        <dbReference type="ChEBI" id="CHEBI:30879"/>
        <dbReference type="ChEBI" id="CHEBI:35924"/>
        <dbReference type="ChEBI" id="CHEBI:83099"/>
        <dbReference type="ChEBI" id="CHEBI:83100"/>
        <dbReference type="EC" id="1.11.1.28"/>
    </reaction>
</comment>
<comment type="biophysicochemical properties">
    <phDependence>
        <text evidence="5">Optimum pH is 7.2.</text>
    </phDependence>
</comment>
<comment type="subunit">
    <text evidence="1 2 3 4 6">Homotrimer. Identified in a complex with AhpC, DlaT and Lpd.</text>
</comment>
<comment type="similarity">
    <text evidence="1">Belongs to the AhpD family.</text>
</comment>
<dbReference type="EC" id="1.11.1.28" evidence="1"/>
<dbReference type="EMBL" id="U44840">
    <property type="protein sequence ID" value="AAA86657.1"/>
    <property type="molecule type" value="Genomic_DNA"/>
</dbReference>
<dbReference type="EMBL" id="AL123456">
    <property type="protein sequence ID" value="CCP45221.1"/>
    <property type="molecule type" value="Genomic_DNA"/>
</dbReference>
<dbReference type="PIR" id="C70679">
    <property type="entry name" value="C70679"/>
</dbReference>
<dbReference type="RefSeq" id="NP_216945.1">
    <property type="nucleotide sequence ID" value="NC_000962.3"/>
</dbReference>
<dbReference type="RefSeq" id="WP_003412536.1">
    <property type="nucleotide sequence ID" value="NZ_NVQJ01000024.1"/>
</dbReference>
<dbReference type="PDB" id="1GU9">
    <property type="method" value="X-ray"/>
    <property type="resolution" value="1.90 A"/>
    <property type="chains" value="A/B/C/D/E/F/G/H/I/J/K/L=1-177"/>
</dbReference>
<dbReference type="PDB" id="1KNC">
    <property type="method" value="X-ray"/>
    <property type="resolution" value="2.00 A"/>
    <property type="chains" value="A/B/C=1-177"/>
</dbReference>
<dbReference type="PDB" id="1LW1">
    <property type="method" value="X-ray"/>
    <property type="resolution" value="2.30 A"/>
    <property type="chains" value="A/B/C=1-177"/>
</dbReference>
<dbReference type="PDB" id="1ME5">
    <property type="method" value="X-ray"/>
    <property type="resolution" value="2.40 A"/>
    <property type="chains" value="A/B/C=1-177"/>
</dbReference>
<dbReference type="PDBsum" id="1GU9"/>
<dbReference type="PDBsum" id="1KNC"/>
<dbReference type="PDBsum" id="1LW1"/>
<dbReference type="PDBsum" id="1ME5"/>
<dbReference type="SMR" id="P9WQB5"/>
<dbReference type="STRING" id="83332.Rv2429"/>
<dbReference type="PaxDb" id="83332-Rv2429"/>
<dbReference type="DNASU" id="885959"/>
<dbReference type="GeneID" id="885959"/>
<dbReference type="KEGG" id="mtu:Rv2429"/>
<dbReference type="KEGG" id="mtv:RVBD_2429"/>
<dbReference type="TubercuList" id="Rv2429"/>
<dbReference type="eggNOG" id="COG0599">
    <property type="taxonomic scope" value="Bacteria"/>
</dbReference>
<dbReference type="InParanoid" id="P9WQB5"/>
<dbReference type="OrthoDB" id="9801997at2"/>
<dbReference type="PhylomeDB" id="P9WQB5"/>
<dbReference type="BRENDA" id="1.11.1.28">
    <property type="organism ID" value="3445"/>
</dbReference>
<dbReference type="Reactome" id="R-HSA-1222541">
    <property type="pathway name" value="Cell redox homeostasis"/>
</dbReference>
<dbReference type="EvolutionaryTrace" id="P9WQB5"/>
<dbReference type="Proteomes" id="UP000001584">
    <property type="component" value="Chromosome"/>
</dbReference>
<dbReference type="GO" id="GO:0005829">
    <property type="term" value="C:cytosol"/>
    <property type="evidence" value="ECO:0000304"/>
    <property type="project" value="Reactome"/>
</dbReference>
<dbReference type="GO" id="GO:0005886">
    <property type="term" value="C:plasma membrane"/>
    <property type="evidence" value="ECO:0007005"/>
    <property type="project" value="MTBBASE"/>
</dbReference>
<dbReference type="GO" id="GO:0008785">
    <property type="term" value="F:alkyl hydroperoxide reductase activity"/>
    <property type="evidence" value="ECO:0007669"/>
    <property type="project" value="UniProtKB-UniRule"/>
</dbReference>
<dbReference type="GO" id="GO:0015036">
    <property type="term" value="F:disulfide oxidoreductase activity"/>
    <property type="evidence" value="ECO:0000314"/>
    <property type="project" value="MTBBASE"/>
</dbReference>
<dbReference type="GO" id="GO:0032843">
    <property type="term" value="F:hydroperoxide reductase activity"/>
    <property type="evidence" value="ECO:0000314"/>
    <property type="project" value="MTBBASE"/>
</dbReference>
<dbReference type="GO" id="GO:0051920">
    <property type="term" value="F:peroxiredoxin activity"/>
    <property type="evidence" value="ECO:0007669"/>
    <property type="project" value="InterPro"/>
</dbReference>
<dbReference type="GO" id="GO:0045454">
    <property type="term" value="P:cell redox homeostasis"/>
    <property type="evidence" value="ECO:0000353"/>
    <property type="project" value="MTBBASE"/>
</dbReference>
<dbReference type="GO" id="GO:0006979">
    <property type="term" value="P:response to oxidative stress"/>
    <property type="evidence" value="ECO:0007669"/>
    <property type="project" value="InterPro"/>
</dbReference>
<dbReference type="FunFam" id="1.20.1290.10:FF:000004">
    <property type="entry name" value="Alkyl hydroperoxide reductase AhpD"/>
    <property type="match status" value="1"/>
</dbReference>
<dbReference type="Gene3D" id="1.20.1290.10">
    <property type="entry name" value="AhpD-like"/>
    <property type="match status" value="1"/>
</dbReference>
<dbReference type="HAMAP" id="MF_01676">
    <property type="entry name" value="AhpD"/>
    <property type="match status" value="1"/>
</dbReference>
<dbReference type="InterPro" id="IPR004674">
    <property type="entry name" value="AhpD"/>
</dbReference>
<dbReference type="InterPro" id="IPR029032">
    <property type="entry name" value="AhpD-like"/>
</dbReference>
<dbReference type="InterPro" id="IPR004675">
    <property type="entry name" value="AhpD_core"/>
</dbReference>
<dbReference type="InterPro" id="IPR003779">
    <property type="entry name" value="CMD-like"/>
</dbReference>
<dbReference type="NCBIfam" id="TIGR00777">
    <property type="entry name" value="ahpD"/>
    <property type="match status" value="1"/>
</dbReference>
<dbReference type="NCBIfam" id="TIGR00778">
    <property type="entry name" value="ahpD_dom"/>
    <property type="match status" value="1"/>
</dbReference>
<dbReference type="PANTHER" id="PTHR33930">
    <property type="entry name" value="ALKYL HYDROPEROXIDE REDUCTASE AHPD"/>
    <property type="match status" value="1"/>
</dbReference>
<dbReference type="PANTHER" id="PTHR33930:SF7">
    <property type="entry name" value="ALKYL HYDROPEROXIDE REDUCTASE AHPD"/>
    <property type="match status" value="1"/>
</dbReference>
<dbReference type="Pfam" id="PF02627">
    <property type="entry name" value="CMD"/>
    <property type="match status" value="1"/>
</dbReference>
<dbReference type="SUPFAM" id="SSF69118">
    <property type="entry name" value="AhpD-like"/>
    <property type="match status" value="1"/>
</dbReference>
<feature type="chain" id="PRO_0000064507" description="Alkyl hydroperoxide reductase AhpD">
    <location>
        <begin position="1"/>
        <end position="177"/>
    </location>
</feature>
<feature type="active site" description="Proton donor" evidence="1 4">
    <location>
        <position position="130"/>
    </location>
</feature>
<feature type="active site" description="Cysteine sulfenic acid (-SOH) intermediate" evidence="1 4">
    <location>
        <position position="133"/>
    </location>
</feature>
<feature type="disulfide bond" evidence="6">
    <location>
        <begin position="130"/>
        <end position="133"/>
    </location>
</feature>
<feature type="disulfide bond" description="Interchain (with C-61 in AhpC); in linked form" evidence="6">
    <location>
        <position position="133"/>
    </location>
</feature>
<feature type="mutagenesis site" description="Reduces protein stability. No effect on catalytic activity." evidence="5">
    <original>E</original>
    <variation>Q</variation>
    <location>
        <position position="118"/>
    </location>
</feature>
<feature type="mutagenesis site" description="Loss of activity." evidence="2 3 5">
    <original>C</original>
    <variation>S</variation>
    <location>
        <position position="130"/>
    </location>
</feature>
<feature type="mutagenesis site" description="Slightly reduced catalytic activity." evidence="5">
    <original>H</original>
    <variation>F</variation>
    <location>
        <position position="132"/>
    </location>
</feature>
<feature type="mutagenesis site" description="Slightly reduced catalytic activity." evidence="5">
    <original>H</original>
    <variation>Q</variation>
    <location>
        <position position="132"/>
    </location>
</feature>
<feature type="mutagenesis site" description="Loss of activity. Loss of interchain disulfide bond with AhpC." evidence="2 3 5">
    <original>C</original>
    <variation>S</variation>
    <location>
        <position position="133"/>
    </location>
</feature>
<feature type="mutagenesis site" description="Reduced catalytic activity." evidence="5">
    <original>H</original>
    <variation>F</variation>
    <location>
        <position position="137"/>
    </location>
</feature>
<feature type="mutagenesis site" description="Slightly reduced catalytic activity." evidence="5">
    <original>H</original>
    <variation>Q</variation>
    <location>
        <position position="137"/>
    </location>
</feature>
<feature type="helix" evidence="7">
    <location>
        <begin position="3"/>
        <end position="9"/>
    </location>
</feature>
<feature type="helix" evidence="7">
    <location>
        <begin position="12"/>
        <end position="14"/>
    </location>
</feature>
<feature type="helix" evidence="7">
    <location>
        <begin position="15"/>
        <end position="24"/>
    </location>
</feature>
<feature type="strand" evidence="7">
    <location>
        <begin position="28"/>
        <end position="30"/>
    </location>
</feature>
<feature type="helix" evidence="7">
    <location>
        <begin position="32"/>
        <end position="45"/>
    </location>
</feature>
<feature type="helix" evidence="7">
    <location>
        <begin position="49"/>
        <end position="59"/>
    </location>
</feature>
<feature type="turn" evidence="7">
    <location>
        <begin position="60"/>
        <end position="62"/>
    </location>
</feature>
<feature type="helix" evidence="7">
    <location>
        <begin position="65"/>
        <end position="90"/>
    </location>
</feature>
<feature type="turn" evidence="7">
    <location>
        <begin position="91"/>
        <end position="97"/>
    </location>
</feature>
<feature type="helix" evidence="7">
    <location>
        <begin position="105"/>
        <end position="108"/>
    </location>
</feature>
<feature type="helix" evidence="7">
    <location>
        <begin position="114"/>
        <end position="128"/>
    </location>
</feature>
<feature type="helix" evidence="7">
    <location>
        <begin position="131"/>
        <end position="143"/>
    </location>
</feature>
<feature type="helix" evidence="7">
    <location>
        <begin position="148"/>
        <end position="173"/>
    </location>
</feature>
<keyword id="KW-0002">3D-structure</keyword>
<keyword id="KW-0049">Antioxidant</keyword>
<keyword id="KW-1015">Disulfide bond</keyword>
<keyword id="KW-0560">Oxidoreductase</keyword>
<keyword id="KW-0575">Peroxidase</keyword>
<keyword id="KW-0676">Redox-active center</keyword>
<keyword id="KW-1185">Reference proteome</keyword>
<evidence type="ECO:0000255" key="1">
    <source>
        <dbReference type="HAMAP-Rule" id="MF_01676"/>
    </source>
</evidence>
<evidence type="ECO:0000269" key="2">
    <source>
    </source>
</evidence>
<evidence type="ECO:0000269" key="3">
    <source>
    </source>
</evidence>
<evidence type="ECO:0000269" key="4">
    <source>
    </source>
</evidence>
<evidence type="ECO:0000269" key="5">
    <source>
    </source>
</evidence>
<evidence type="ECO:0000269" key="6">
    <source>
    </source>
</evidence>
<evidence type="ECO:0007829" key="7">
    <source>
        <dbReference type="PDB" id="1KNC"/>
    </source>
</evidence>
<accession>P9WQB5</accession>
<accession>L0T9S9</accession>
<accession>P0A5N4</accession>
<accession>Q57353</accession>
<organism>
    <name type="scientific">Mycobacterium tuberculosis (strain ATCC 25618 / H37Rv)</name>
    <dbReference type="NCBI Taxonomy" id="83332"/>
    <lineage>
        <taxon>Bacteria</taxon>
        <taxon>Bacillati</taxon>
        <taxon>Actinomycetota</taxon>
        <taxon>Actinomycetes</taxon>
        <taxon>Mycobacteriales</taxon>
        <taxon>Mycobacteriaceae</taxon>
        <taxon>Mycobacterium</taxon>
        <taxon>Mycobacterium tuberculosis complex</taxon>
    </lineage>
</organism>
<proteinExistence type="evidence at protein level"/>
<name>AHPD_MYCTU</name>
<sequence>MSIEKLKAALPEYAKDIKLNLSSITRSSVLDQEQLWGTLLASAAATRNPQVLADIGAEATDHLSAAARHAALGAAAIMGMNNVFYRGRGFLEGRYDDLRPGLRMNIIANPGIPKANFELWSFAVSAINGCSHCLVAHEHTLRTVGVDREAIFEALKAAAIVSGVAQALATIEALSPS</sequence>